<reference key="1">
    <citation type="journal article" date="1999" name="Nature">
        <title>Sequence and analysis of chromosome 2 of the plant Arabidopsis thaliana.</title>
        <authorList>
            <person name="Lin X."/>
            <person name="Kaul S."/>
            <person name="Rounsley S.D."/>
            <person name="Shea T.P."/>
            <person name="Benito M.-I."/>
            <person name="Town C.D."/>
            <person name="Fujii C.Y."/>
            <person name="Mason T.M."/>
            <person name="Bowman C.L."/>
            <person name="Barnstead M.E."/>
            <person name="Feldblyum T.V."/>
            <person name="Buell C.R."/>
            <person name="Ketchum K.A."/>
            <person name="Lee J.J."/>
            <person name="Ronning C.M."/>
            <person name="Koo H.L."/>
            <person name="Moffat K.S."/>
            <person name="Cronin L.A."/>
            <person name="Shen M."/>
            <person name="Pai G."/>
            <person name="Van Aken S."/>
            <person name="Umayam L."/>
            <person name="Tallon L.J."/>
            <person name="Gill J.E."/>
            <person name="Adams M.D."/>
            <person name="Carrera A.J."/>
            <person name="Creasy T.H."/>
            <person name="Goodman H.M."/>
            <person name="Somerville C.R."/>
            <person name="Copenhaver G.P."/>
            <person name="Preuss D."/>
            <person name="Nierman W.C."/>
            <person name="White O."/>
            <person name="Eisen J.A."/>
            <person name="Salzberg S.L."/>
            <person name="Fraser C.M."/>
            <person name="Venter J.C."/>
        </authorList>
    </citation>
    <scope>NUCLEOTIDE SEQUENCE [LARGE SCALE GENOMIC DNA]</scope>
    <source>
        <strain>cv. Columbia</strain>
    </source>
</reference>
<reference key="2">
    <citation type="journal article" date="2017" name="Plant J.">
        <title>Araport11: a complete reannotation of the Arabidopsis thaliana reference genome.</title>
        <authorList>
            <person name="Cheng C.Y."/>
            <person name="Krishnakumar V."/>
            <person name="Chan A.P."/>
            <person name="Thibaud-Nissen F."/>
            <person name="Schobel S."/>
            <person name="Town C.D."/>
        </authorList>
    </citation>
    <scope>GENOME REANNOTATION</scope>
    <source>
        <strain>cv. Columbia</strain>
    </source>
</reference>
<reference key="3">
    <citation type="journal article" date="2003" name="Science">
        <title>Empirical analysis of transcriptional activity in the Arabidopsis genome.</title>
        <authorList>
            <person name="Yamada K."/>
            <person name="Lim J."/>
            <person name="Dale J.M."/>
            <person name="Chen H."/>
            <person name="Shinn P."/>
            <person name="Palm C.J."/>
            <person name="Southwick A.M."/>
            <person name="Wu H.C."/>
            <person name="Kim C.J."/>
            <person name="Nguyen M."/>
            <person name="Pham P.K."/>
            <person name="Cheuk R.F."/>
            <person name="Karlin-Newmann G."/>
            <person name="Liu S.X."/>
            <person name="Lam B."/>
            <person name="Sakano H."/>
            <person name="Wu T."/>
            <person name="Yu G."/>
            <person name="Miranda M."/>
            <person name="Quach H.L."/>
            <person name="Tripp M."/>
            <person name="Chang C.H."/>
            <person name="Lee J.M."/>
            <person name="Toriumi M.J."/>
            <person name="Chan M.M."/>
            <person name="Tang C.C."/>
            <person name="Onodera C.S."/>
            <person name="Deng J.M."/>
            <person name="Akiyama K."/>
            <person name="Ansari Y."/>
            <person name="Arakawa T."/>
            <person name="Banh J."/>
            <person name="Banno F."/>
            <person name="Bowser L."/>
            <person name="Brooks S.Y."/>
            <person name="Carninci P."/>
            <person name="Chao Q."/>
            <person name="Choy N."/>
            <person name="Enju A."/>
            <person name="Goldsmith A.D."/>
            <person name="Gurjal M."/>
            <person name="Hansen N.F."/>
            <person name="Hayashizaki Y."/>
            <person name="Johnson-Hopson C."/>
            <person name="Hsuan V.W."/>
            <person name="Iida K."/>
            <person name="Karnes M."/>
            <person name="Khan S."/>
            <person name="Koesema E."/>
            <person name="Ishida J."/>
            <person name="Jiang P.X."/>
            <person name="Jones T."/>
            <person name="Kawai J."/>
            <person name="Kamiya A."/>
            <person name="Meyers C."/>
            <person name="Nakajima M."/>
            <person name="Narusaka M."/>
            <person name="Seki M."/>
            <person name="Sakurai T."/>
            <person name="Satou M."/>
            <person name="Tamse R."/>
            <person name="Vaysberg M."/>
            <person name="Wallender E.K."/>
            <person name="Wong C."/>
            <person name="Yamamura Y."/>
            <person name="Yuan S."/>
            <person name="Shinozaki K."/>
            <person name="Davis R.W."/>
            <person name="Theologis A."/>
            <person name="Ecker J.R."/>
        </authorList>
    </citation>
    <scope>NUCLEOTIDE SEQUENCE [LARGE SCALE MRNA] (ISOFORM 1)</scope>
    <source>
        <strain>cv. Columbia</strain>
    </source>
</reference>
<reference key="4">
    <citation type="submission" date="2004-09" db="EMBL/GenBank/DDBJ databases">
        <title>Large-scale analysis of RIKEN Arabidopsis full-length (RAFL) cDNAs.</title>
        <authorList>
            <person name="Totoki Y."/>
            <person name="Seki M."/>
            <person name="Ishida J."/>
            <person name="Nakajima M."/>
            <person name="Enju A."/>
            <person name="Kamiya A."/>
            <person name="Narusaka M."/>
            <person name="Shin-i T."/>
            <person name="Nakagawa M."/>
            <person name="Sakamoto N."/>
            <person name="Oishi K."/>
            <person name="Kohara Y."/>
            <person name="Kobayashi M."/>
            <person name="Toyoda A."/>
            <person name="Sakaki Y."/>
            <person name="Sakurai T."/>
            <person name="Iida K."/>
            <person name="Akiyama K."/>
            <person name="Satou M."/>
            <person name="Toyoda T."/>
            <person name="Konagaya A."/>
            <person name="Carninci P."/>
            <person name="Kawai J."/>
            <person name="Hayashizaki Y."/>
            <person name="Shinozaki K."/>
        </authorList>
    </citation>
    <scope>NUCLEOTIDE SEQUENCE [LARGE SCALE MRNA] (ISOFORM 1)</scope>
    <source>
        <strain>cv. Columbia</strain>
    </source>
</reference>
<reference key="5">
    <citation type="journal article" date="2003" name="Mol. Biol. Evol.">
        <title>The basic helix-loop-helix transcription factor family in plants: a genome-wide study of protein structure and functional diversity.</title>
        <authorList>
            <person name="Heim M.A."/>
            <person name="Jakoby M."/>
            <person name="Werber M."/>
            <person name="Martin C."/>
            <person name="Weisshaar B."/>
            <person name="Bailey P.C."/>
        </authorList>
    </citation>
    <scope>NUCLEOTIDE SEQUENCE [MRNA] OF 224-327 (ISOFORM 1)</scope>
    <scope>TISSUE SPECIFICITY</scope>
    <scope>GENE FAMILY</scope>
    <scope>NOMENCLATURE</scope>
    <source>
        <strain>cv. Columbia</strain>
        <tissue>Flower</tissue>
    </source>
</reference>
<reference key="6">
    <citation type="journal article" date="2003" name="Plant Cell">
        <title>The Arabidopsis basic/helix-loop-helix transcription factor family.</title>
        <authorList>
            <person name="Toledo-Ortiz G."/>
            <person name="Huq E."/>
            <person name="Quail P.H."/>
        </authorList>
    </citation>
    <scope>GENE FAMILY</scope>
</reference>
<reference key="7">
    <citation type="journal article" date="2003" name="Plant Cell">
        <title>Update on the basic helix-loop-helix transcription factor gene family in Arabidopsis thaliana.</title>
        <authorList>
            <person name="Bailey P.C."/>
            <person name="Martin C."/>
            <person name="Toledo-Ortiz G."/>
            <person name="Quail P.H."/>
            <person name="Huq E."/>
            <person name="Heim M.A."/>
            <person name="Jakoby M."/>
            <person name="Werber M."/>
            <person name="Weisshaar B."/>
        </authorList>
    </citation>
    <scope>GENE FAMILY</scope>
    <scope>NOMENCLATURE</scope>
</reference>
<gene>
    <name type="primary">BHLH48</name>
    <name type="synonym">EN97</name>
    <name type="ordered locus">At2g42300</name>
    <name type="ORF">MHK10.2</name>
</gene>
<comment type="subunit">
    <text evidence="4">Homodimer.</text>
</comment>
<comment type="subcellular location">
    <subcellularLocation>
        <location evidence="1">Nucleus</location>
    </subcellularLocation>
</comment>
<comment type="alternative products">
    <event type="alternative splicing"/>
    <isoform>
        <id>Q8VZ02-1</id>
        <name>1</name>
        <sequence type="displayed"/>
    </isoform>
    <text>A number of isoforms are produced. According to EST sequences.</text>
</comment>
<comment type="tissue specificity">
    <text evidence="3">Expressed in leaves, stems, and flowers.</text>
</comment>
<comment type="miscellaneous">
    <molecule>Isoform 1</molecule>
    <text>No experimental confirmation available.</text>
</comment>
<comment type="sequence caution" evidence="4">
    <conflict type="erroneous gene model prediction">
        <sequence resource="EMBL-CDS" id="AAD23713"/>
    </conflict>
</comment>
<evidence type="ECO:0000255" key="1">
    <source>
        <dbReference type="PROSITE-ProRule" id="PRU00981"/>
    </source>
</evidence>
<evidence type="ECO:0000256" key="2">
    <source>
        <dbReference type="SAM" id="MobiDB-lite"/>
    </source>
</evidence>
<evidence type="ECO:0000269" key="3">
    <source>
    </source>
</evidence>
<evidence type="ECO:0000305" key="4"/>
<protein>
    <recommendedName>
        <fullName>Transcription factor bHLH48</fullName>
    </recommendedName>
    <alternativeName>
        <fullName>Basic helix-loop-helix protein 48</fullName>
        <shortName>AtbHLH48</shortName>
        <shortName>bHLH 48</shortName>
    </alternativeName>
    <alternativeName>
        <fullName>Transcription factor EN 97</fullName>
    </alternativeName>
    <alternativeName>
        <fullName>bHLH transcription factor bHLH048</fullName>
    </alternativeName>
</protein>
<proteinExistence type="evidence at transcript level"/>
<feature type="chain" id="PRO_0000358746" description="Transcription factor bHLH48">
    <location>
        <begin position="1"/>
        <end position="327"/>
    </location>
</feature>
<feature type="domain" description="bHLH" evidence="1">
    <location>
        <begin position="191"/>
        <end position="241"/>
    </location>
</feature>
<feature type="region of interest" description="Disordered" evidence="2">
    <location>
        <begin position="137"/>
        <end position="179"/>
    </location>
</feature>
<feature type="sequence conflict" description="In Ref. 4; BAD43782/BAD43347." evidence="4" ref="4">
    <original>A</original>
    <variation>G</variation>
    <location>
        <position position="228"/>
    </location>
</feature>
<feature type="sequence conflict" description="In Ref. 5; AF488583." evidence="4" ref="5">
    <original>E</original>
    <variation>K</variation>
    <location>
        <position position="304"/>
    </location>
</feature>
<dbReference type="EMBL" id="AC005956">
    <property type="protein sequence ID" value="AAD23713.1"/>
    <property type="status" value="ALT_SEQ"/>
    <property type="molecule type" value="Genomic_DNA"/>
</dbReference>
<dbReference type="EMBL" id="CP002685">
    <property type="protein sequence ID" value="AEC10102.1"/>
    <property type="molecule type" value="Genomic_DNA"/>
</dbReference>
<dbReference type="EMBL" id="AY065411">
    <property type="protein sequence ID" value="AAL38852.1"/>
    <property type="molecule type" value="mRNA"/>
</dbReference>
<dbReference type="EMBL" id="AY096521">
    <property type="protein sequence ID" value="AAM20171.1"/>
    <property type="molecule type" value="mRNA"/>
</dbReference>
<dbReference type="EMBL" id="AK175584">
    <property type="protein sequence ID" value="BAD43347.1"/>
    <property type="molecule type" value="mRNA"/>
</dbReference>
<dbReference type="EMBL" id="AK176019">
    <property type="protein sequence ID" value="BAD43782.1"/>
    <property type="molecule type" value="mRNA"/>
</dbReference>
<dbReference type="EMBL" id="AK176634">
    <property type="protein sequence ID" value="BAD44397.1"/>
    <property type="molecule type" value="mRNA"/>
</dbReference>
<dbReference type="EMBL" id="AF488583">
    <property type="status" value="NOT_ANNOTATED_CDS"/>
    <property type="molecule type" value="mRNA"/>
</dbReference>
<dbReference type="PIR" id="C84852">
    <property type="entry name" value="C84852"/>
</dbReference>
<dbReference type="RefSeq" id="NP_850368.1">
    <molecule id="Q8VZ02-1"/>
    <property type="nucleotide sequence ID" value="NM_180037.4"/>
</dbReference>
<dbReference type="SMR" id="Q8VZ02"/>
<dbReference type="BioGRID" id="4168">
    <property type="interactions" value="2"/>
</dbReference>
<dbReference type="FunCoup" id="Q8VZ02">
    <property type="interactions" value="295"/>
</dbReference>
<dbReference type="IntAct" id="Q8VZ02">
    <property type="interactions" value="1"/>
</dbReference>
<dbReference type="STRING" id="3702.Q8VZ02"/>
<dbReference type="PaxDb" id="3702-AT2G42300.1"/>
<dbReference type="ProteomicsDB" id="240348">
    <molecule id="Q8VZ02-1"/>
</dbReference>
<dbReference type="EnsemblPlants" id="AT2G42300.1">
    <molecule id="Q8VZ02-1"/>
    <property type="protein sequence ID" value="AT2G42300.1"/>
    <property type="gene ID" value="AT2G42300"/>
</dbReference>
<dbReference type="GeneID" id="818831"/>
<dbReference type="Gramene" id="AT2G42300.1">
    <molecule id="Q8VZ02-1"/>
    <property type="protein sequence ID" value="AT2G42300.1"/>
    <property type="gene ID" value="AT2G42300"/>
</dbReference>
<dbReference type="KEGG" id="ath:AT2G42300"/>
<dbReference type="Araport" id="AT2G42300"/>
<dbReference type="TAIR" id="AT2G42300"/>
<dbReference type="eggNOG" id="ENOG502QS36">
    <property type="taxonomic scope" value="Eukaryota"/>
</dbReference>
<dbReference type="HOGENOM" id="CLU_053042_0_0_1"/>
<dbReference type="InParanoid" id="Q8VZ02"/>
<dbReference type="OMA" id="NGESYHQ"/>
<dbReference type="PhylomeDB" id="Q8VZ02"/>
<dbReference type="PRO" id="PR:Q8VZ02"/>
<dbReference type="Proteomes" id="UP000006548">
    <property type="component" value="Chromosome 2"/>
</dbReference>
<dbReference type="ExpressionAtlas" id="Q8VZ02">
    <property type="expression patterns" value="baseline and differential"/>
</dbReference>
<dbReference type="GO" id="GO:0005634">
    <property type="term" value="C:nucleus"/>
    <property type="evidence" value="ECO:0007669"/>
    <property type="project" value="UniProtKB-SubCell"/>
</dbReference>
<dbReference type="GO" id="GO:0003677">
    <property type="term" value="F:DNA binding"/>
    <property type="evidence" value="ECO:0000314"/>
    <property type="project" value="TAIR"/>
</dbReference>
<dbReference type="GO" id="GO:0003700">
    <property type="term" value="F:DNA-binding transcription factor activity"/>
    <property type="evidence" value="ECO:0000250"/>
    <property type="project" value="TAIR"/>
</dbReference>
<dbReference type="GO" id="GO:0046983">
    <property type="term" value="F:protein dimerization activity"/>
    <property type="evidence" value="ECO:0007669"/>
    <property type="project" value="InterPro"/>
</dbReference>
<dbReference type="GO" id="GO:0006355">
    <property type="term" value="P:regulation of DNA-templated transcription"/>
    <property type="evidence" value="ECO:0000304"/>
    <property type="project" value="TAIR"/>
</dbReference>
<dbReference type="CDD" id="cd18919">
    <property type="entry name" value="bHLH_AtBPE_like"/>
    <property type="match status" value="1"/>
</dbReference>
<dbReference type="FunFam" id="4.10.280.10:FF:000042">
    <property type="entry name" value="transcription factor bHLH48-like isoform X1"/>
    <property type="match status" value="1"/>
</dbReference>
<dbReference type="Gene3D" id="4.10.280.10">
    <property type="entry name" value="Helix-loop-helix DNA-binding domain"/>
    <property type="match status" value="1"/>
</dbReference>
<dbReference type="InterPro" id="IPR011598">
    <property type="entry name" value="bHLH_dom"/>
</dbReference>
<dbReference type="InterPro" id="IPR024097">
    <property type="entry name" value="bHLH_ZIP_TF"/>
</dbReference>
<dbReference type="InterPro" id="IPR036638">
    <property type="entry name" value="HLH_DNA-bd_sf"/>
</dbReference>
<dbReference type="PANTHER" id="PTHR12565">
    <property type="entry name" value="STEROL REGULATORY ELEMENT-BINDING PROTEIN"/>
    <property type="match status" value="1"/>
</dbReference>
<dbReference type="PANTHER" id="PTHR12565:SF112">
    <property type="entry name" value="TRANSCRIPTION FACTOR BHLH48-RELATED"/>
    <property type="match status" value="1"/>
</dbReference>
<dbReference type="Pfam" id="PF00010">
    <property type="entry name" value="HLH"/>
    <property type="match status" value="1"/>
</dbReference>
<dbReference type="SMART" id="SM00353">
    <property type="entry name" value="HLH"/>
    <property type="match status" value="1"/>
</dbReference>
<dbReference type="SUPFAM" id="SSF47459">
    <property type="entry name" value="HLH, helix-loop-helix DNA-binding domain"/>
    <property type="match status" value="1"/>
</dbReference>
<dbReference type="PROSITE" id="PS50888">
    <property type="entry name" value="BHLH"/>
    <property type="match status" value="1"/>
</dbReference>
<sequence length="327" mass="36192">MDLTQGFRARSGVVGPVAGLESLNFSDEFRHLVTTMPPETTGGSFTALLEMPVTQAMELLHFPDSSSSQARTVTSGDISPTTLHPFGALTFPSNSLLLDRAARFSVIATEQNGNFSGETANSLPSNPGANLDRVKAEPAETDSMVENQNQSYSSGKRKEREKKVKSSTKKNKSSVESDKLPYVHVRARRGQATDNHSLAERARREKINARMKLLQELVPGCDKIQGTALVLDEIINHVQTLQRQVEMLSMRLAAVNPRIDFNLDSILASENGSLMDGSFNAESYHQLQQWPFDGYHQPEWGREEDHHQANFSMGSATLHPNQVKMEL</sequence>
<name>BH048_ARATH</name>
<accession>Q8VZ02</accession>
<accession>Q67ZU8</accession>
<accession>Q9SLC9</accession>
<keyword id="KW-0025">Alternative splicing</keyword>
<keyword id="KW-0238">DNA-binding</keyword>
<keyword id="KW-0539">Nucleus</keyword>
<keyword id="KW-1185">Reference proteome</keyword>
<keyword id="KW-0804">Transcription</keyword>
<keyword id="KW-0805">Transcription regulation</keyword>
<organism>
    <name type="scientific">Arabidopsis thaliana</name>
    <name type="common">Mouse-ear cress</name>
    <dbReference type="NCBI Taxonomy" id="3702"/>
    <lineage>
        <taxon>Eukaryota</taxon>
        <taxon>Viridiplantae</taxon>
        <taxon>Streptophyta</taxon>
        <taxon>Embryophyta</taxon>
        <taxon>Tracheophyta</taxon>
        <taxon>Spermatophyta</taxon>
        <taxon>Magnoliopsida</taxon>
        <taxon>eudicotyledons</taxon>
        <taxon>Gunneridae</taxon>
        <taxon>Pentapetalae</taxon>
        <taxon>rosids</taxon>
        <taxon>malvids</taxon>
        <taxon>Brassicales</taxon>
        <taxon>Brassicaceae</taxon>
        <taxon>Camelineae</taxon>
        <taxon>Arabidopsis</taxon>
    </lineage>
</organism>